<reference key="1">
    <citation type="journal article" date="2008" name="Nat. Genet.">
        <title>Skint1, the prototype of a newly identified immunoglobulin superfamily gene cluster, positively selects epidermal gammadelta T cells.</title>
        <authorList>
            <person name="Boyden L.M."/>
            <person name="Lewis J.M."/>
            <person name="Barbee S.D."/>
            <person name="Bas A."/>
            <person name="Girardi M."/>
            <person name="Hayday A.C."/>
            <person name="Tigelaar R.E."/>
            <person name="Lifton R.P."/>
        </authorList>
    </citation>
    <scope>NUCLEOTIDE SEQUENCE [MRNA] (ISOFORMS 1; 2 AND 3)</scope>
    <scope>TISSUE SPECIFICITY</scope>
    <source>
        <strain>C57BL/6J</strain>
    </source>
</reference>
<reference key="2">
    <citation type="journal article" date="2005" name="Science">
        <title>The transcriptional landscape of the mammalian genome.</title>
        <authorList>
            <person name="Carninci P."/>
            <person name="Kasukawa T."/>
            <person name="Katayama S."/>
            <person name="Gough J."/>
            <person name="Frith M.C."/>
            <person name="Maeda N."/>
            <person name="Oyama R."/>
            <person name="Ravasi T."/>
            <person name="Lenhard B."/>
            <person name="Wells C."/>
            <person name="Kodzius R."/>
            <person name="Shimokawa K."/>
            <person name="Bajic V.B."/>
            <person name="Brenner S.E."/>
            <person name="Batalov S."/>
            <person name="Forrest A.R."/>
            <person name="Zavolan M."/>
            <person name="Davis M.J."/>
            <person name="Wilming L.G."/>
            <person name="Aidinis V."/>
            <person name="Allen J.E."/>
            <person name="Ambesi-Impiombato A."/>
            <person name="Apweiler R."/>
            <person name="Aturaliya R.N."/>
            <person name="Bailey T.L."/>
            <person name="Bansal M."/>
            <person name="Baxter L."/>
            <person name="Beisel K.W."/>
            <person name="Bersano T."/>
            <person name="Bono H."/>
            <person name="Chalk A.M."/>
            <person name="Chiu K.P."/>
            <person name="Choudhary V."/>
            <person name="Christoffels A."/>
            <person name="Clutterbuck D.R."/>
            <person name="Crowe M.L."/>
            <person name="Dalla E."/>
            <person name="Dalrymple B.P."/>
            <person name="de Bono B."/>
            <person name="Della Gatta G."/>
            <person name="di Bernardo D."/>
            <person name="Down T."/>
            <person name="Engstrom P."/>
            <person name="Fagiolini M."/>
            <person name="Faulkner G."/>
            <person name="Fletcher C.F."/>
            <person name="Fukushima T."/>
            <person name="Furuno M."/>
            <person name="Futaki S."/>
            <person name="Gariboldi M."/>
            <person name="Georgii-Hemming P."/>
            <person name="Gingeras T.R."/>
            <person name="Gojobori T."/>
            <person name="Green R.E."/>
            <person name="Gustincich S."/>
            <person name="Harbers M."/>
            <person name="Hayashi Y."/>
            <person name="Hensch T.K."/>
            <person name="Hirokawa N."/>
            <person name="Hill D."/>
            <person name="Huminiecki L."/>
            <person name="Iacono M."/>
            <person name="Ikeo K."/>
            <person name="Iwama A."/>
            <person name="Ishikawa T."/>
            <person name="Jakt M."/>
            <person name="Kanapin A."/>
            <person name="Katoh M."/>
            <person name="Kawasawa Y."/>
            <person name="Kelso J."/>
            <person name="Kitamura H."/>
            <person name="Kitano H."/>
            <person name="Kollias G."/>
            <person name="Krishnan S.P."/>
            <person name="Kruger A."/>
            <person name="Kummerfeld S.K."/>
            <person name="Kurochkin I.V."/>
            <person name="Lareau L.F."/>
            <person name="Lazarevic D."/>
            <person name="Lipovich L."/>
            <person name="Liu J."/>
            <person name="Liuni S."/>
            <person name="McWilliam S."/>
            <person name="Madan Babu M."/>
            <person name="Madera M."/>
            <person name="Marchionni L."/>
            <person name="Matsuda H."/>
            <person name="Matsuzawa S."/>
            <person name="Miki H."/>
            <person name="Mignone F."/>
            <person name="Miyake S."/>
            <person name="Morris K."/>
            <person name="Mottagui-Tabar S."/>
            <person name="Mulder N."/>
            <person name="Nakano N."/>
            <person name="Nakauchi H."/>
            <person name="Ng P."/>
            <person name="Nilsson R."/>
            <person name="Nishiguchi S."/>
            <person name="Nishikawa S."/>
            <person name="Nori F."/>
            <person name="Ohara O."/>
            <person name="Okazaki Y."/>
            <person name="Orlando V."/>
            <person name="Pang K.C."/>
            <person name="Pavan W.J."/>
            <person name="Pavesi G."/>
            <person name="Pesole G."/>
            <person name="Petrovsky N."/>
            <person name="Piazza S."/>
            <person name="Reed J."/>
            <person name="Reid J.F."/>
            <person name="Ring B.Z."/>
            <person name="Ringwald M."/>
            <person name="Rost B."/>
            <person name="Ruan Y."/>
            <person name="Salzberg S.L."/>
            <person name="Sandelin A."/>
            <person name="Schneider C."/>
            <person name="Schoenbach C."/>
            <person name="Sekiguchi K."/>
            <person name="Semple C.A."/>
            <person name="Seno S."/>
            <person name="Sessa L."/>
            <person name="Sheng Y."/>
            <person name="Shibata Y."/>
            <person name="Shimada H."/>
            <person name="Shimada K."/>
            <person name="Silva D."/>
            <person name="Sinclair B."/>
            <person name="Sperling S."/>
            <person name="Stupka E."/>
            <person name="Sugiura K."/>
            <person name="Sultana R."/>
            <person name="Takenaka Y."/>
            <person name="Taki K."/>
            <person name="Tammoja K."/>
            <person name="Tan S.L."/>
            <person name="Tang S."/>
            <person name="Taylor M.S."/>
            <person name="Tegner J."/>
            <person name="Teichmann S.A."/>
            <person name="Ueda H.R."/>
            <person name="van Nimwegen E."/>
            <person name="Verardo R."/>
            <person name="Wei C.L."/>
            <person name="Yagi K."/>
            <person name="Yamanishi H."/>
            <person name="Zabarovsky E."/>
            <person name="Zhu S."/>
            <person name="Zimmer A."/>
            <person name="Hide W."/>
            <person name="Bult C."/>
            <person name="Grimmond S.M."/>
            <person name="Teasdale R.D."/>
            <person name="Liu E.T."/>
            <person name="Brusic V."/>
            <person name="Quackenbush J."/>
            <person name="Wahlestedt C."/>
            <person name="Mattick J.S."/>
            <person name="Hume D.A."/>
            <person name="Kai C."/>
            <person name="Sasaki D."/>
            <person name="Tomaru Y."/>
            <person name="Fukuda S."/>
            <person name="Kanamori-Katayama M."/>
            <person name="Suzuki M."/>
            <person name="Aoki J."/>
            <person name="Arakawa T."/>
            <person name="Iida J."/>
            <person name="Imamura K."/>
            <person name="Itoh M."/>
            <person name="Kato T."/>
            <person name="Kawaji H."/>
            <person name="Kawagashira N."/>
            <person name="Kawashima T."/>
            <person name="Kojima M."/>
            <person name="Kondo S."/>
            <person name="Konno H."/>
            <person name="Nakano K."/>
            <person name="Ninomiya N."/>
            <person name="Nishio T."/>
            <person name="Okada M."/>
            <person name="Plessy C."/>
            <person name="Shibata K."/>
            <person name="Shiraki T."/>
            <person name="Suzuki S."/>
            <person name="Tagami M."/>
            <person name="Waki K."/>
            <person name="Watahiki A."/>
            <person name="Okamura-Oho Y."/>
            <person name="Suzuki H."/>
            <person name="Kawai J."/>
            <person name="Hayashizaki Y."/>
        </authorList>
    </citation>
    <scope>NUCLEOTIDE SEQUENCE [LARGE SCALE MRNA] (ISOFORM 2)</scope>
    <source>
        <strain>C57BL/6J</strain>
        <tissue>Thymus</tissue>
    </source>
</reference>
<proteinExistence type="evidence at transcript level"/>
<dbReference type="EMBL" id="EF494894">
    <property type="protein sequence ID" value="ABS30716.1"/>
    <property type="molecule type" value="mRNA"/>
</dbReference>
<dbReference type="EMBL" id="EF494895">
    <property type="protein sequence ID" value="ABS30717.1"/>
    <property type="molecule type" value="mRNA"/>
</dbReference>
<dbReference type="EMBL" id="EF494896">
    <property type="protein sequence ID" value="ABS30718.1"/>
    <property type="molecule type" value="mRNA"/>
</dbReference>
<dbReference type="EMBL" id="AK040383">
    <property type="protein sequence ID" value="BAC30578.1"/>
    <property type="molecule type" value="mRNA"/>
</dbReference>
<dbReference type="CCDS" id="CCDS38838.1">
    <molecule id="A7TZF0-2"/>
</dbReference>
<dbReference type="CCDS" id="CCDS51268.1">
    <molecule id="A7TZF0-1"/>
</dbReference>
<dbReference type="RefSeq" id="NP_001095944.1">
    <molecule id="A7TZF0-1"/>
    <property type="nucleotide sequence ID" value="NM_001102474.2"/>
</dbReference>
<dbReference type="RefSeq" id="NP_001335283.1">
    <molecule id="A7TZF0-3"/>
    <property type="nucleotide sequence ID" value="NM_001348354.1"/>
</dbReference>
<dbReference type="RefSeq" id="NP_808246.1">
    <molecule id="A7TZF0-2"/>
    <property type="nucleotide sequence ID" value="NM_177578.4"/>
</dbReference>
<dbReference type="SMR" id="A7TZF0"/>
<dbReference type="FunCoup" id="A7TZF0">
    <property type="interactions" value="192"/>
</dbReference>
<dbReference type="STRING" id="10090.ENSMUSP00000131300"/>
<dbReference type="GlyCosmos" id="A7TZF0">
    <property type="glycosylation" value="1 site, No reported glycans"/>
</dbReference>
<dbReference type="GlyGen" id="A7TZF0">
    <property type="glycosylation" value="1 site"/>
</dbReference>
<dbReference type="DNASU" id="195564"/>
<dbReference type="Ensembl" id="ENSMUST00000038455.12">
    <molecule id="A7TZF0-2"/>
    <property type="protein sequence ID" value="ENSMUSP00000042662.6"/>
    <property type="gene ID" value="ENSMUSG00000070868.12"/>
</dbReference>
<dbReference type="Ensembl" id="ENSMUST00000170945.2">
    <molecule id="A7TZF0-1"/>
    <property type="protein sequence ID" value="ENSMUSP00000131300.2"/>
    <property type="gene ID" value="ENSMUSG00000070868.12"/>
</dbReference>
<dbReference type="GeneID" id="195564"/>
<dbReference type="KEGG" id="mmu:195564"/>
<dbReference type="UCSC" id="uc008udt.1">
    <molecule id="A7TZF0-1"/>
    <property type="organism name" value="mouse"/>
</dbReference>
<dbReference type="UCSC" id="uc008udu.1">
    <molecule id="A7TZF0-2"/>
    <property type="organism name" value="mouse"/>
</dbReference>
<dbReference type="UCSC" id="uc012dir.1">
    <molecule id="A7TZF0-3"/>
    <property type="organism name" value="mouse"/>
</dbReference>
<dbReference type="AGR" id="MGI:3045331"/>
<dbReference type="CTD" id="195564"/>
<dbReference type="MGI" id="MGI:3045331">
    <property type="gene designation" value="Skint3"/>
</dbReference>
<dbReference type="VEuPathDB" id="HostDB:ENSMUSG00000070868"/>
<dbReference type="GeneTree" id="ENSGT00940000162562"/>
<dbReference type="HOGENOM" id="CLU_013137_8_7_1"/>
<dbReference type="InParanoid" id="A7TZF0"/>
<dbReference type="OMA" id="SIMHSTI"/>
<dbReference type="OrthoDB" id="9049620at2759"/>
<dbReference type="PhylomeDB" id="A7TZF0"/>
<dbReference type="TreeFam" id="TF331083"/>
<dbReference type="BioGRID-ORCS" id="195564">
    <property type="hits" value="1 hit in 74 CRISPR screens"/>
</dbReference>
<dbReference type="PRO" id="PR:A7TZF0"/>
<dbReference type="Proteomes" id="UP000000589">
    <property type="component" value="Chromosome 4"/>
</dbReference>
<dbReference type="RNAct" id="A7TZF0">
    <property type="molecule type" value="protein"/>
</dbReference>
<dbReference type="Bgee" id="ENSMUSG00000070868">
    <property type="expression patterns" value="Expressed in zone of skin and 10 other cell types or tissues"/>
</dbReference>
<dbReference type="GO" id="GO:0016020">
    <property type="term" value="C:membrane"/>
    <property type="evidence" value="ECO:0007669"/>
    <property type="project" value="UniProtKB-SubCell"/>
</dbReference>
<dbReference type="FunFam" id="2.60.40.10:FF:000088">
    <property type="entry name" value="Butyrophilin subfamily 1 member A1"/>
    <property type="match status" value="1"/>
</dbReference>
<dbReference type="FunFam" id="2.60.40.10:FF:000142">
    <property type="entry name" value="V-set domain-containing T-cell activation inhibitor 1"/>
    <property type="match status" value="1"/>
</dbReference>
<dbReference type="Gene3D" id="2.60.40.10">
    <property type="entry name" value="Immunoglobulins"/>
    <property type="match status" value="2"/>
</dbReference>
<dbReference type="InterPro" id="IPR053896">
    <property type="entry name" value="BTN3A2-like_Ig-C"/>
</dbReference>
<dbReference type="InterPro" id="IPR007110">
    <property type="entry name" value="Ig-like_dom"/>
</dbReference>
<dbReference type="InterPro" id="IPR036179">
    <property type="entry name" value="Ig-like_dom_sf"/>
</dbReference>
<dbReference type="InterPro" id="IPR013783">
    <property type="entry name" value="Ig-like_fold"/>
</dbReference>
<dbReference type="InterPro" id="IPR003599">
    <property type="entry name" value="Ig_sub"/>
</dbReference>
<dbReference type="InterPro" id="IPR013106">
    <property type="entry name" value="Ig_V-set"/>
</dbReference>
<dbReference type="InterPro" id="IPR050504">
    <property type="entry name" value="IgSF_BTN/MOG"/>
</dbReference>
<dbReference type="PANTHER" id="PTHR24100">
    <property type="entry name" value="BUTYROPHILIN"/>
    <property type="match status" value="1"/>
</dbReference>
<dbReference type="PANTHER" id="PTHR24100:SF102">
    <property type="entry name" value="SELECTION AND UPKEEP OF INTRAEPITHELIAL T-CELLS PROTEIN 2-RELATED"/>
    <property type="match status" value="1"/>
</dbReference>
<dbReference type="Pfam" id="PF22705">
    <property type="entry name" value="C2-set_3"/>
    <property type="match status" value="1"/>
</dbReference>
<dbReference type="Pfam" id="PF07686">
    <property type="entry name" value="V-set"/>
    <property type="match status" value="1"/>
</dbReference>
<dbReference type="SMART" id="SM00409">
    <property type="entry name" value="IG"/>
    <property type="match status" value="1"/>
</dbReference>
<dbReference type="SMART" id="SM00406">
    <property type="entry name" value="IGv"/>
    <property type="match status" value="1"/>
</dbReference>
<dbReference type="SUPFAM" id="SSF48726">
    <property type="entry name" value="Immunoglobulin"/>
    <property type="match status" value="2"/>
</dbReference>
<dbReference type="PROSITE" id="PS50835">
    <property type="entry name" value="IG_LIKE"/>
    <property type="match status" value="1"/>
</dbReference>
<keyword id="KW-0025">Alternative splicing</keyword>
<keyword id="KW-1015">Disulfide bond</keyword>
<keyword id="KW-0325">Glycoprotein</keyword>
<keyword id="KW-0393">Immunoglobulin domain</keyword>
<keyword id="KW-0472">Membrane</keyword>
<keyword id="KW-1185">Reference proteome</keyword>
<keyword id="KW-0677">Repeat</keyword>
<keyword id="KW-0732">Signal</keyword>
<keyword id="KW-0812">Transmembrane</keyword>
<keyword id="KW-1133">Transmembrane helix</keyword>
<sequence>MGSIQIIFAAYCVVLCVLQMLVLSSEQFTITGLERPVLAPLGGILELSCQLSPPQNAQQMEIRWFRNRYTEPVYLYRNGKDLHGETISKYVERTELLKHDIGKGKVTLRVFKVTVDDDGSYHCVFKDGIFYEEHITEVKVTATSSDIKIIMHPPNIKGVMLECHSRGWFPQPHMEWRDSNGQVIPATSKSQSQDENKLFNMTMNLFADVGLHQIVTCYIQNLLTHQEESISIVLTGDLFSWKIDWILILSIIACVMIPYSMTSYLQQHLIHGSCSQRSHHWRKNAMVCMSSVIAIIGSMLILHLKQRVPISDQHFELDTLYLEDISVILCVVIVFNLKLNLLTYYRLERKYDGCTPGCKACFYILKIIIIILPFVFTFGCYNAIFLKYHQLQKKVSIPDPLYYFYTSWLVNMEMLGVFLVFFPTFINLIEFSQFIKTVPKPIWLCQENMREDDAIRHR</sequence>
<organism>
    <name type="scientific">Mus musculus</name>
    <name type="common">Mouse</name>
    <dbReference type="NCBI Taxonomy" id="10090"/>
    <lineage>
        <taxon>Eukaryota</taxon>
        <taxon>Metazoa</taxon>
        <taxon>Chordata</taxon>
        <taxon>Craniata</taxon>
        <taxon>Vertebrata</taxon>
        <taxon>Euteleostomi</taxon>
        <taxon>Mammalia</taxon>
        <taxon>Eutheria</taxon>
        <taxon>Euarchontoglires</taxon>
        <taxon>Glires</taxon>
        <taxon>Rodentia</taxon>
        <taxon>Myomorpha</taxon>
        <taxon>Muroidea</taxon>
        <taxon>Muridae</taxon>
        <taxon>Murinae</taxon>
        <taxon>Mus</taxon>
        <taxon>Mus</taxon>
    </lineage>
</organism>
<protein>
    <recommendedName>
        <fullName>Selection and upkeep of intraepithelial T-cells protein 3</fullName>
        <shortName>Skint-3</shortName>
    </recommendedName>
</protein>
<comment type="function">
    <text evidence="1">May act by engaging a cell surface molecule on immature T-cells in the embryonic thymus.</text>
</comment>
<comment type="subcellular location">
    <subcellularLocation>
        <location evidence="7">Membrane</location>
        <topology evidence="7">Multi-pass membrane protein</topology>
    </subcellularLocation>
</comment>
<comment type="alternative products">
    <event type="alternative splicing"/>
    <isoform>
        <id>A7TZF0-1</id>
        <name>1</name>
        <name>A</name>
        <sequence type="displayed"/>
    </isoform>
    <isoform>
        <id>A7TZF0-2</id>
        <name>2</name>
        <name>B</name>
        <sequence type="described" ref="VSP_034881"/>
    </isoform>
    <isoform>
        <id>A7TZF0-3</id>
        <name>3</name>
        <name>C</name>
        <sequence type="described" ref="VSP_034880"/>
    </isoform>
</comment>
<comment type="tissue specificity">
    <text evidence="4">Expressed in skin and thymus.</text>
</comment>
<comment type="miscellaneous">
    <text>Encoded by one of the 11 copies of Skint genes clustered in the D1 region of the chromosome 4.</text>
</comment>
<comment type="similarity">
    <text evidence="7">Belongs to the SKINT family.</text>
</comment>
<accession>A7TZF0</accession>
<accession>A7TZF2</accession>
<accession>Q8BIN0</accession>
<gene>
    <name type="primary">Skint3</name>
</gene>
<feature type="signal peptide" evidence="2">
    <location>
        <begin position="1"/>
        <end position="24"/>
    </location>
</feature>
<feature type="chain" id="PRO_5000270105" description="Selection and upkeep of intraepithelial T-cells protein 3">
    <location>
        <begin position="25"/>
        <end position="458"/>
    </location>
</feature>
<feature type="topological domain" description="Extracellular" evidence="2">
    <location>
        <begin position="25"/>
        <end position="237"/>
    </location>
</feature>
<feature type="transmembrane region" description="Helical" evidence="2">
    <location>
        <begin position="238"/>
        <end position="258"/>
    </location>
</feature>
<feature type="topological domain" description="Cytoplasmic" evidence="2">
    <location>
        <begin position="259"/>
        <end position="283"/>
    </location>
</feature>
<feature type="transmembrane region" description="Helical" evidence="2">
    <location>
        <begin position="284"/>
        <end position="304"/>
    </location>
</feature>
<feature type="topological domain" description="Extracellular" evidence="2">
    <location>
        <begin position="305"/>
        <end position="324"/>
    </location>
</feature>
<feature type="transmembrane region" description="Helical" evidence="2">
    <location>
        <begin position="325"/>
        <end position="345"/>
    </location>
</feature>
<feature type="topological domain" description="Cytoplasmic" evidence="2">
    <location>
        <begin position="346"/>
        <end position="359"/>
    </location>
</feature>
<feature type="transmembrane region" description="Helical" evidence="2">
    <location>
        <begin position="360"/>
        <end position="380"/>
    </location>
</feature>
<feature type="topological domain" description="Extracellular" evidence="2">
    <location>
        <begin position="381"/>
        <end position="414"/>
    </location>
</feature>
<feature type="transmembrane region" description="Helical" evidence="2">
    <location>
        <begin position="415"/>
        <end position="435"/>
    </location>
</feature>
<feature type="topological domain" description="Cytoplasmic" evidence="2">
    <location>
        <begin position="436"/>
        <end position="458"/>
    </location>
</feature>
<feature type="domain" description="Ig-like V-type">
    <location>
        <begin position="26"/>
        <end position="141"/>
    </location>
</feature>
<feature type="domain" description="Ig-like C1-type">
    <location>
        <begin position="142"/>
        <end position="231"/>
    </location>
</feature>
<feature type="glycosylation site" description="N-linked (GlcNAc...) asparagine" evidence="2">
    <location>
        <position position="200"/>
    </location>
</feature>
<feature type="disulfide bond" evidence="3">
    <location>
        <begin position="49"/>
        <end position="123"/>
    </location>
</feature>
<feature type="disulfide bond" evidence="3">
    <location>
        <begin position="163"/>
        <end position="217"/>
    </location>
</feature>
<feature type="splice variant" id="VSP_034880" description="In isoform 3." evidence="6">
    <location>
        <begin position="26"/>
        <end position="141"/>
    </location>
</feature>
<feature type="splice variant" id="VSP_034881" description="In isoform 2." evidence="5 6">
    <location>
        <begin position="236"/>
        <end position="307"/>
    </location>
</feature>
<evidence type="ECO:0000250" key="1"/>
<evidence type="ECO:0000255" key="2"/>
<evidence type="ECO:0000255" key="3">
    <source>
        <dbReference type="PROSITE-ProRule" id="PRU00114"/>
    </source>
</evidence>
<evidence type="ECO:0000269" key="4">
    <source>
    </source>
</evidence>
<evidence type="ECO:0000303" key="5">
    <source>
    </source>
</evidence>
<evidence type="ECO:0000303" key="6">
    <source>
    </source>
</evidence>
<evidence type="ECO:0000305" key="7"/>
<name>SKIT3_MOUSE</name>